<dbReference type="EMBL" id="AE009948">
    <property type="protein sequence ID" value="AAM99515.1"/>
    <property type="molecule type" value="Genomic_DNA"/>
</dbReference>
<dbReference type="RefSeq" id="NP_687643.1">
    <property type="nucleotide sequence ID" value="NC_004116.1"/>
</dbReference>
<dbReference type="RefSeq" id="WP_000076708.1">
    <property type="nucleotide sequence ID" value="NC_004116.1"/>
</dbReference>
<dbReference type="SMR" id="Q8E0V1"/>
<dbReference type="STRING" id="208435.SAG0619"/>
<dbReference type="KEGG" id="sag:SAG0619"/>
<dbReference type="PATRIC" id="fig|208435.3.peg.619"/>
<dbReference type="HOGENOM" id="CLU_135567_0_0_9"/>
<dbReference type="OrthoDB" id="1632173at2"/>
<dbReference type="Proteomes" id="UP000000821">
    <property type="component" value="Chromosome"/>
</dbReference>
<dbReference type="Gene3D" id="1.10.1470.10">
    <property type="entry name" value="YjbJ"/>
    <property type="match status" value="1"/>
</dbReference>
<dbReference type="InterPro" id="IPR008462">
    <property type="entry name" value="CsbD"/>
</dbReference>
<dbReference type="InterPro" id="IPR036629">
    <property type="entry name" value="YjbJ_sf"/>
</dbReference>
<dbReference type="Pfam" id="PF05532">
    <property type="entry name" value="CsbD"/>
    <property type="match status" value="1"/>
</dbReference>
<dbReference type="SUPFAM" id="SSF69047">
    <property type="entry name" value="Hypothetical protein YjbJ"/>
    <property type="match status" value="1"/>
</dbReference>
<name>Y619_STRA5</name>
<protein>
    <recommendedName>
        <fullName>UPF0337 protein SAG0619</fullName>
    </recommendedName>
</protein>
<keyword id="KW-1185">Reference proteome</keyword>
<accession>Q8E0V1</accession>
<evidence type="ECO:0000256" key="1">
    <source>
        <dbReference type="SAM" id="MobiDB-lite"/>
    </source>
</evidence>
<evidence type="ECO:0000305" key="2"/>
<organism>
    <name type="scientific">Streptococcus agalactiae serotype V (strain ATCC BAA-611 / 2603 V/R)</name>
    <dbReference type="NCBI Taxonomy" id="208435"/>
    <lineage>
        <taxon>Bacteria</taxon>
        <taxon>Bacillati</taxon>
        <taxon>Bacillota</taxon>
        <taxon>Bacilli</taxon>
        <taxon>Lactobacillales</taxon>
        <taxon>Streptococcaceae</taxon>
        <taxon>Streptococcus</taxon>
    </lineage>
</organism>
<feature type="chain" id="PRO_0000210043" description="UPF0337 protein SAG0619">
    <location>
        <begin position="1"/>
        <end position="66"/>
    </location>
</feature>
<feature type="region of interest" description="Disordered" evidence="1">
    <location>
        <begin position="1"/>
        <end position="22"/>
    </location>
</feature>
<proteinExistence type="inferred from homology"/>
<reference key="1">
    <citation type="journal article" date="2002" name="Proc. Natl. Acad. Sci. U.S.A.">
        <title>Complete genome sequence and comparative genomic analysis of an emerging human pathogen, serotype V Streptococcus agalactiae.</title>
        <authorList>
            <person name="Tettelin H."/>
            <person name="Masignani V."/>
            <person name="Cieslewicz M.J."/>
            <person name="Eisen J.A."/>
            <person name="Peterson S.N."/>
            <person name="Wessels M.R."/>
            <person name="Paulsen I.T."/>
            <person name="Nelson K.E."/>
            <person name="Margarit I."/>
            <person name="Read T.D."/>
            <person name="Madoff L.C."/>
            <person name="Wolf A.M."/>
            <person name="Beanan M.J."/>
            <person name="Brinkac L.M."/>
            <person name="Daugherty S.C."/>
            <person name="DeBoy R.T."/>
            <person name="Durkin A.S."/>
            <person name="Kolonay J.F."/>
            <person name="Madupu R."/>
            <person name="Lewis M.R."/>
            <person name="Radune D."/>
            <person name="Fedorova N.B."/>
            <person name="Scanlan D."/>
            <person name="Khouri H.M."/>
            <person name="Mulligan S."/>
            <person name="Carty H.A."/>
            <person name="Cline R.T."/>
            <person name="Van Aken S.E."/>
            <person name="Gill J."/>
            <person name="Scarselli M."/>
            <person name="Mora M."/>
            <person name="Iacobini E.T."/>
            <person name="Brettoni C."/>
            <person name="Galli G."/>
            <person name="Mariani M."/>
            <person name="Vegni F."/>
            <person name="Maione D."/>
            <person name="Rinaudo D."/>
            <person name="Rappuoli R."/>
            <person name="Telford J.L."/>
            <person name="Kasper D.L."/>
            <person name="Grandi G."/>
            <person name="Fraser C.M."/>
        </authorList>
    </citation>
    <scope>NUCLEOTIDE SEQUENCE [LARGE SCALE GENOMIC DNA]</scope>
    <source>
        <strain>ATCC BAA-611 / 2603 V/R</strain>
    </source>
</reference>
<gene>
    <name type="ordered locus">SAG0619</name>
</gene>
<comment type="similarity">
    <text evidence="2">Belongs to the UPF0337 (CsbD) family.</text>
</comment>
<sequence>MSQEKLKSKLDQAKGGAKEGFGKITGDKELEAKGFIEKTIAKGKELADDAKDAVEGAVDAVKEKLK</sequence>